<gene>
    <name evidence="5" type="primary">Ppil6</name>
</gene>
<organism>
    <name type="scientific">Mus musculus</name>
    <name type="common">Mouse</name>
    <dbReference type="NCBI Taxonomy" id="10090"/>
    <lineage>
        <taxon>Eukaryota</taxon>
        <taxon>Metazoa</taxon>
        <taxon>Chordata</taxon>
        <taxon>Craniata</taxon>
        <taxon>Vertebrata</taxon>
        <taxon>Euteleostomi</taxon>
        <taxon>Mammalia</taxon>
        <taxon>Eutheria</taxon>
        <taxon>Euarchontoglires</taxon>
        <taxon>Glires</taxon>
        <taxon>Rodentia</taxon>
        <taxon>Myomorpha</taxon>
        <taxon>Muroidea</taxon>
        <taxon>Muridae</taxon>
        <taxon>Murinae</taxon>
        <taxon>Mus</taxon>
        <taxon>Mus</taxon>
    </lineage>
</organism>
<name>PPIL6_MOUSE</name>
<feature type="chain" id="PRO_0000263756" description="Probable inactive peptidyl-prolyl cis-trans isomerase-like 6">
    <location>
        <begin position="1"/>
        <end position="313"/>
    </location>
</feature>
<feature type="domain" description="PPIase cyclophilin-type" evidence="2">
    <location>
        <begin position="147"/>
        <end position="310"/>
    </location>
</feature>
<proteinExistence type="evidence at protein level"/>
<dbReference type="EMBL" id="AK013818">
    <property type="protein sequence ID" value="BAB29003.1"/>
    <property type="status" value="ALT_FRAME"/>
    <property type="molecule type" value="mRNA"/>
</dbReference>
<dbReference type="EMBL" id="BC147756">
    <property type="protein sequence ID" value="AAI47757.1"/>
    <property type="molecule type" value="mRNA"/>
</dbReference>
<dbReference type="EMBL" id="BC147757">
    <property type="protein sequence ID" value="AAI47758.1"/>
    <property type="molecule type" value="mRNA"/>
</dbReference>
<dbReference type="CCDS" id="CCDS48548.1"/>
<dbReference type="RefSeq" id="NP_082706.1">
    <property type="nucleotide sequence ID" value="NM_028430.2"/>
</dbReference>
<dbReference type="SMR" id="Q9D6D8"/>
<dbReference type="FunCoup" id="Q9D6D8">
    <property type="interactions" value="532"/>
</dbReference>
<dbReference type="STRING" id="10090.ENSMUSP00000101146"/>
<dbReference type="PhosphoSitePlus" id="Q9D6D8"/>
<dbReference type="PaxDb" id="10090-ENSMUSP00000101146"/>
<dbReference type="ProteomicsDB" id="289735"/>
<dbReference type="ProteomicsDB" id="330391"/>
<dbReference type="Antibodypedia" id="32250">
    <property type="antibodies" value="189 antibodies from 18 providers"/>
</dbReference>
<dbReference type="Ensembl" id="ENSMUST00000105507.5">
    <property type="protein sequence ID" value="ENSMUSP00000101146.4"/>
    <property type="gene ID" value="ENSMUSG00000078451.6"/>
</dbReference>
<dbReference type="GeneID" id="73075"/>
<dbReference type="KEGG" id="mmu:73075"/>
<dbReference type="AGR" id="MGI:1920325"/>
<dbReference type="CTD" id="285755"/>
<dbReference type="MGI" id="MGI:1920325">
    <property type="gene designation" value="Ppil6"/>
</dbReference>
<dbReference type="VEuPathDB" id="HostDB:ENSMUSG00000078451"/>
<dbReference type="eggNOG" id="KOG0546">
    <property type="taxonomic scope" value="Eukaryota"/>
</dbReference>
<dbReference type="GeneTree" id="ENSGT00940000159634"/>
<dbReference type="HOGENOM" id="CLU_058893_1_0_1"/>
<dbReference type="InParanoid" id="Q9D6D8"/>
<dbReference type="OMA" id="ECKIINC"/>
<dbReference type="OrthoDB" id="408413at2759"/>
<dbReference type="TreeFam" id="TF351326"/>
<dbReference type="BioGRID-ORCS" id="73075">
    <property type="hits" value="1 hit in 76 CRISPR screens"/>
</dbReference>
<dbReference type="ChiTaRS" id="Ppil6">
    <property type="organism name" value="mouse"/>
</dbReference>
<dbReference type="PRO" id="PR:Q9D6D8"/>
<dbReference type="Proteomes" id="UP000000589">
    <property type="component" value="Chromosome 10"/>
</dbReference>
<dbReference type="RNAct" id="Q9D6D8">
    <property type="molecule type" value="protein"/>
</dbReference>
<dbReference type="Bgee" id="ENSMUSG00000078451">
    <property type="expression patterns" value="Expressed in otolith organ and 138 other cell types or tissues"/>
</dbReference>
<dbReference type="GO" id="GO:0003755">
    <property type="term" value="F:peptidyl-prolyl cis-trans isomerase activity"/>
    <property type="evidence" value="ECO:0007669"/>
    <property type="project" value="InterPro"/>
</dbReference>
<dbReference type="FunFam" id="2.40.100.10:FF:000024">
    <property type="entry name" value="Peptidyl-prolyl cis-trans isomerase"/>
    <property type="match status" value="1"/>
</dbReference>
<dbReference type="Gene3D" id="2.40.100.10">
    <property type="entry name" value="Cyclophilin-like"/>
    <property type="match status" value="1"/>
</dbReference>
<dbReference type="InterPro" id="IPR029000">
    <property type="entry name" value="Cyclophilin-like_dom_sf"/>
</dbReference>
<dbReference type="InterPro" id="IPR002130">
    <property type="entry name" value="Cyclophilin-type_PPIase_dom"/>
</dbReference>
<dbReference type="PANTHER" id="PTHR11071">
    <property type="entry name" value="PEPTIDYL-PROLYL CIS-TRANS ISOMERASE"/>
    <property type="match status" value="1"/>
</dbReference>
<dbReference type="PANTHER" id="PTHR11071:SF561">
    <property type="entry name" value="PEPTIDYL-PROLYL CIS-TRANS ISOMERASE D-RELATED"/>
    <property type="match status" value="1"/>
</dbReference>
<dbReference type="Pfam" id="PF00160">
    <property type="entry name" value="Pro_isomerase"/>
    <property type="match status" value="1"/>
</dbReference>
<dbReference type="PRINTS" id="PR00153">
    <property type="entry name" value="CSAPPISMRASE"/>
</dbReference>
<dbReference type="SUPFAM" id="SSF50891">
    <property type="entry name" value="Cyclophilin-like"/>
    <property type="match status" value="1"/>
</dbReference>
<dbReference type="PROSITE" id="PS50072">
    <property type="entry name" value="CSA_PPIASE_2"/>
    <property type="match status" value="1"/>
</dbReference>
<comment type="function">
    <text evidence="1">Probable inactive PPIase with no peptidyl-prolyl cis-trans isomerase activity.</text>
</comment>
<comment type="similarity">
    <text evidence="3">Belongs to the cyclophilin-type PPIase family.</text>
</comment>
<comment type="caution">
    <text evidence="1">Despite the fact that it belongs to the cyclophilin-type PPIase family, it has probably no peptidyl-prolyl cis-trans isomerase activity.</text>
</comment>
<comment type="sequence caution" evidence="3">
    <conflict type="frameshift">
        <sequence resource="EMBL-CDS" id="BAB29003"/>
    </conflict>
</comment>
<sequence length="313" mass="35562">MATQQPCRPKSKPPACHVRLPPEPPLKLKVVGLFKSSSFQVSKTIAETLKTSYPYRFEDPVIVPLQEFAWDQFLEEKKRELKGETWVYSSYVMCFVNDQLLGNAFDLKKWAQKVWDVIDVRPSALYEALTLDYATKFLKDTKHDFVYLDICIDLSPIGRLIFELYCDACPRTCTNFQVLCTGTSGFSERGTKLHYKDSIFHRVVQNGWIQGGDIVQGRGDDGESIYGPTFEDENFSIPHNKRGVLGMVNKGHHTNGSQFYITLQAAPYLDKKYVAFGQLIEGTHVLKQLELVPTENERPLLLCSIADSGVLYT</sequence>
<keyword id="KW-1185">Reference proteome</keyword>
<evidence type="ECO:0000250" key="1">
    <source>
        <dbReference type="UniProtKB" id="Q8IXY8"/>
    </source>
</evidence>
<evidence type="ECO:0000255" key="2">
    <source>
        <dbReference type="PROSITE-ProRule" id="PRU00156"/>
    </source>
</evidence>
<evidence type="ECO:0000305" key="3"/>
<evidence type="ECO:0000312" key="4">
    <source>
        <dbReference type="EMBL" id="AAI47757.1"/>
    </source>
</evidence>
<evidence type="ECO:0000312" key="5">
    <source>
        <dbReference type="MGI" id="MGI:1920325"/>
    </source>
</evidence>
<evidence type="ECO:0000312" key="6">
    <source>
        <dbReference type="Proteomes" id="UP000000589"/>
    </source>
</evidence>
<protein>
    <recommendedName>
        <fullName evidence="3">Probable inactive peptidyl-prolyl cis-trans isomerase-like 6</fullName>
        <shortName evidence="3">PPIase</shortName>
    </recommendedName>
    <alternativeName>
        <fullName evidence="1">Cyclophilin-like protein PPIL6</fullName>
    </alternativeName>
</protein>
<accession>Q9D6D8</accession>
<accession>B2RWF7</accession>
<reference key="1">
    <citation type="journal article" date="2005" name="Science">
        <title>The transcriptional landscape of the mammalian genome.</title>
        <authorList>
            <person name="Carninci P."/>
            <person name="Kasukawa T."/>
            <person name="Katayama S."/>
            <person name="Gough J."/>
            <person name="Frith M.C."/>
            <person name="Maeda N."/>
            <person name="Oyama R."/>
            <person name="Ravasi T."/>
            <person name="Lenhard B."/>
            <person name="Wells C."/>
            <person name="Kodzius R."/>
            <person name="Shimokawa K."/>
            <person name="Bajic V.B."/>
            <person name="Brenner S.E."/>
            <person name="Batalov S."/>
            <person name="Forrest A.R."/>
            <person name="Zavolan M."/>
            <person name="Davis M.J."/>
            <person name="Wilming L.G."/>
            <person name="Aidinis V."/>
            <person name="Allen J.E."/>
            <person name="Ambesi-Impiombato A."/>
            <person name="Apweiler R."/>
            <person name="Aturaliya R.N."/>
            <person name="Bailey T.L."/>
            <person name="Bansal M."/>
            <person name="Baxter L."/>
            <person name="Beisel K.W."/>
            <person name="Bersano T."/>
            <person name="Bono H."/>
            <person name="Chalk A.M."/>
            <person name="Chiu K.P."/>
            <person name="Choudhary V."/>
            <person name="Christoffels A."/>
            <person name="Clutterbuck D.R."/>
            <person name="Crowe M.L."/>
            <person name="Dalla E."/>
            <person name="Dalrymple B.P."/>
            <person name="de Bono B."/>
            <person name="Della Gatta G."/>
            <person name="di Bernardo D."/>
            <person name="Down T."/>
            <person name="Engstrom P."/>
            <person name="Fagiolini M."/>
            <person name="Faulkner G."/>
            <person name="Fletcher C.F."/>
            <person name="Fukushima T."/>
            <person name="Furuno M."/>
            <person name="Futaki S."/>
            <person name="Gariboldi M."/>
            <person name="Georgii-Hemming P."/>
            <person name="Gingeras T.R."/>
            <person name="Gojobori T."/>
            <person name="Green R.E."/>
            <person name="Gustincich S."/>
            <person name="Harbers M."/>
            <person name="Hayashi Y."/>
            <person name="Hensch T.K."/>
            <person name="Hirokawa N."/>
            <person name="Hill D."/>
            <person name="Huminiecki L."/>
            <person name="Iacono M."/>
            <person name="Ikeo K."/>
            <person name="Iwama A."/>
            <person name="Ishikawa T."/>
            <person name="Jakt M."/>
            <person name="Kanapin A."/>
            <person name="Katoh M."/>
            <person name="Kawasawa Y."/>
            <person name="Kelso J."/>
            <person name="Kitamura H."/>
            <person name="Kitano H."/>
            <person name="Kollias G."/>
            <person name="Krishnan S.P."/>
            <person name="Kruger A."/>
            <person name="Kummerfeld S.K."/>
            <person name="Kurochkin I.V."/>
            <person name="Lareau L.F."/>
            <person name="Lazarevic D."/>
            <person name="Lipovich L."/>
            <person name="Liu J."/>
            <person name="Liuni S."/>
            <person name="McWilliam S."/>
            <person name="Madan Babu M."/>
            <person name="Madera M."/>
            <person name="Marchionni L."/>
            <person name="Matsuda H."/>
            <person name="Matsuzawa S."/>
            <person name="Miki H."/>
            <person name="Mignone F."/>
            <person name="Miyake S."/>
            <person name="Morris K."/>
            <person name="Mottagui-Tabar S."/>
            <person name="Mulder N."/>
            <person name="Nakano N."/>
            <person name="Nakauchi H."/>
            <person name="Ng P."/>
            <person name="Nilsson R."/>
            <person name="Nishiguchi S."/>
            <person name="Nishikawa S."/>
            <person name="Nori F."/>
            <person name="Ohara O."/>
            <person name="Okazaki Y."/>
            <person name="Orlando V."/>
            <person name="Pang K.C."/>
            <person name="Pavan W.J."/>
            <person name="Pavesi G."/>
            <person name="Pesole G."/>
            <person name="Petrovsky N."/>
            <person name="Piazza S."/>
            <person name="Reed J."/>
            <person name="Reid J.F."/>
            <person name="Ring B.Z."/>
            <person name="Ringwald M."/>
            <person name="Rost B."/>
            <person name="Ruan Y."/>
            <person name="Salzberg S.L."/>
            <person name="Sandelin A."/>
            <person name="Schneider C."/>
            <person name="Schoenbach C."/>
            <person name="Sekiguchi K."/>
            <person name="Semple C.A."/>
            <person name="Seno S."/>
            <person name="Sessa L."/>
            <person name="Sheng Y."/>
            <person name="Shibata Y."/>
            <person name="Shimada H."/>
            <person name="Shimada K."/>
            <person name="Silva D."/>
            <person name="Sinclair B."/>
            <person name="Sperling S."/>
            <person name="Stupka E."/>
            <person name="Sugiura K."/>
            <person name="Sultana R."/>
            <person name="Takenaka Y."/>
            <person name="Taki K."/>
            <person name="Tammoja K."/>
            <person name="Tan S.L."/>
            <person name="Tang S."/>
            <person name="Taylor M.S."/>
            <person name="Tegner J."/>
            <person name="Teichmann S.A."/>
            <person name="Ueda H.R."/>
            <person name="van Nimwegen E."/>
            <person name="Verardo R."/>
            <person name="Wei C.L."/>
            <person name="Yagi K."/>
            <person name="Yamanishi H."/>
            <person name="Zabarovsky E."/>
            <person name="Zhu S."/>
            <person name="Zimmer A."/>
            <person name="Hide W."/>
            <person name="Bult C."/>
            <person name="Grimmond S.M."/>
            <person name="Teasdale R.D."/>
            <person name="Liu E.T."/>
            <person name="Brusic V."/>
            <person name="Quackenbush J."/>
            <person name="Wahlestedt C."/>
            <person name="Mattick J.S."/>
            <person name="Hume D.A."/>
            <person name="Kai C."/>
            <person name="Sasaki D."/>
            <person name="Tomaru Y."/>
            <person name="Fukuda S."/>
            <person name="Kanamori-Katayama M."/>
            <person name="Suzuki M."/>
            <person name="Aoki J."/>
            <person name="Arakawa T."/>
            <person name="Iida J."/>
            <person name="Imamura K."/>
            <person name="Itoh M."/>
            <person name="Kato T."/>
            <person name="Kawaji H."/>
            <person name="Kawagashira N."/>
            <person name="Kawashima T."/>
            <person name="Kojima M."/>
            <person name="Kondo S."/>
            <person name="Konno H."/>
            <person name="Nakano K."/>
            <person name="Ninomiya N."/>
            <person name="Nishio T."/>
            <person name="Okada M."/>
            <person name="Plessy C."/>
            <person name="Shibata K."/>
            <person name="Shiraki T."/>
            <person name="Suzuki S."/>
            <person name="Tagami M."/>
            <person name="Waki K."/>
            <person name="Watahiki A."/>
            <person name="Okamura-Oho Y."/>
            <person name="Suzuki H."/>
            <person name="Kawai J."/>
            <person name="Hayashizaki Y."/>
        </authorList>
    </citation>
    <scope>NUCLEOTIDE SEQUENCE [LARGE SCALE MRNA]</scope>
    <source>
        <strain>C57BL/6J</strain>
        <tissue>Hippocampus</tissue>
    </source>
</reference>
<reference evidence="6" key="2">
    <citation type="journal article" date="2009" name="PLoS Biol.">
        <title>Lineage-specific biology revealed by a finished genome assembly of the mouse.</title>
        <authorList>
            <person name="Church D.M."/>
            <person name="Goodstadt L."/>
            <person name="Hillier L.W."/>
            <person name="Zody M.C."/>
            <person name="Goldstein S."/>
            <person name="She X."/>
            <person name="Bult C.J."/>
            <person name="Agarwala R."/>
            <person name="Cherry J.L."/>
            <person name="DiCuccio M."/>
            <person name="Hlavina W."/>
            <person name="Kapustin Y."/>
            <person name="Meric P."/>
            <person name="Maglott D."/>
            <person name="Birtle Z."/>
            <person name="Marques A.C."/>
            <person name="Graves T."/>
            <person name="Zhou S."/>
            <person name="Teague B."/>
            <person name="Potamousis K."/>
            <person name="Churas C."/>
            <person name="Place M."/>
            <person name="Herschleb J."/>
            <person name="Runnheim R."/>
            <person name="Forrest D."/>
            <person name="Amos-Landgraf J."/>
            <person name="Schwartz D.C."/>
            <person name="Cheng Z."/>
            <person name="Lindblad-Toh K."/>
            <person name="Eichler E.E."/>
            <person name="Ponting C.P."/>
        </authorList>
    </citation>
    <scope>NUCLEOTIDE SEQUENCE [LARGE SCALE GENOMIC DNA]</scope>
    <source>
        <strain evidence="6">C57BL/6J</strain>
    </source>
</reference>
<reference evidence="4" key="3">
    <citation type="journal article" date="2004" name="Genome Res.">
        <title>The status, quality, and expansion of the NIH full-length cDNA project: the Mammalian Gene Collection (MGC).</title>
        <authorList>
            <consortium name="The MGC Project Team"/>
        </authorList>
    </citation>
    <scope>NUCLEOTIDE SEQUENCE [LARGE SCALE MRNA]</scope>
    <source>
        <tissue evidence="4">Brain</tissue>
    </source>
</reference>
<reference key="4">
    <citation type="journal article" date="2010" name="Cell">
        <title>A tissue-specific atlas of mouse protein phosphorylation and expression.</title>
        <authorList>
            <person name="Huttlin E.L."/>
            <person name="Jedrychowski M.P."/>
            <person name="Elias J.E."/>
            <person name="Goswami T."/>
            <person name="Rad R."/>
            <person name="Beausoleil S.A."/>
            <person name="Villen J."/>
            <person name="Haas W."/>
            <person name="Sowa M.E."/>
            <person name="Gygi S.P."/>
        </authorList>
    </citation>
    <scope>IDENTIFICATION BY MASS SPECTROMETRY [LARGE SCALE ANALYSIS]</scope>
    <source>
        <tissue>Testis</tissue>
    </source>
</reference>